<gene>
    <name type="primary">hisC2</name>
    <name type="ordered locus">RSc0905</name>
    <name type="ORF">RS04510</name>
</gene>
<evidence type="ECO:0000250" key="1"/>
<evidence type="ECO:0000305" key="2"/>
<protein>
    <recommendedName>
        <fullName>Histidinol-phosphate aminotransferase 2</fullName>
        <ecNumber>2.6.1.9</ecNumber>
    </recommendedName>
    <alternativeName>
        <fullName>Imidazole acetol-phosphate transaminase 2</fullName>
    </alternativeName>
</protein>
<sequence length="374" mass="39627">MSLQFGPEYVRAIAPYVTGKPISEVAREFGLEAARIVKLASNENPLGMPASARVAMTAAIDGLARYPDANGFSLKAALHAKFGVPEAWITLGNGSNDILELAARALVAPGQGVIYAQHAFAVYALAAQEVGARAVEVPARDYGHDLDAMAAAITPDTRLIYVANPNNPTGTFLPADAVAAFLAKVPPTVVVVLDEAYNEFLKPEQQYDSIAWVRRYPNLLVSRTFSKAYGLAGLRVGYGIAQPQLTALLNRIRQPFNVNSLAQAAAVAALSDTEFLRRSAELNAAGYAQLTQAFARLGLEYVPSSGNFVLVRVGDDADAGARVNLALLRQGVIVRPVGNYGLPQWLRISIGLPEENAACIAALESALAQAEAAA</sequence>
<accession>Q8Y0Y8</accession>
<feature type="chain" id="PRO_0000153431" description="Histidinol-phosphate aminotransferase 2">
    <location>
        <begin position="1"/>
        <end position="374"/>
    </location>
</feature>
<feature type="modified residue" description="N6-(pyridoxal phosphate)lysine" evidence="1">
    <location>
        <position position="227"/>
    </location>
</feature>
<name>HIS82_RALN1</name>
<dbReference type="EC" id="2.6.1.9"/>
<dbReference type="EMBL" id="AL646052">
    <property type="protein sequence ID" value="CAD14607.1"/>
    <property type="molecule type" value="Genomic_DNA"/>
</dbReference>
<dbReference type="RefSeq" id="WP_011000857.1">
    <property type="nucleotide sequence ID" value="NC_003295.1"/>
</dbReference>
<dbReference type="SMR" id="Q8Y0Y8"/>
<dbReference type="STRING" id="267608.RSc0905"/>
<dbReference type="EnsemblBacteria" id="CAD14607">
    <property type="protein sequence ID" value="CAD14607"/>
    <property type="gene ID" value="RSc0905"/>
</dbReference>
<dbReference type="KEGG" id="rso:RSc0905"/>
<dbReference type="PATRIC" id="fig|267608.8.peg.927"/>
<dbReference type="eggNOG" id="COG0079">
    <property type="taxonomic scope" value="Bacteria"/>
</dbReference>
<dbReference type="HOGENOM" id="CLU_017584_3_3_4"/>
<dbReference type="UniPathway" id="UPA00031">
    <property type="reaction ID" value="UER00012"/>
</dbReference>
<dbReference type="Proteomes" id="UP000001436">
    <property type="component" value="Chromosome"/>
</dbReference>
<dbReference type="GO" id="GO:0004400">
    <property type="term" value="F:histidinol-phosphate transaminase activity"/>
    <property type="evidence" value="ECO:0007669"/>
    <property type="project" value="UniProtKB-UniRule"/>
</dbReference>
<dbReference type="GO" id="GO:0030170">
    <property type="term" value="F:pyridoxal phosphate binding"/>
    <property type="evidence" value="ECO:0007669"/>
    <property type="project" value="InterPro"/>
</dbReference>
<dbReference type="GO" id="GO:0000105">
    <property type="term" value="P:L-histidine biosynthetic process"/>
    <property type="evidence" value="ECO:0007669"/>
    <property type="project" value="UniProtKB-UniRule"/>
</dbReference>
<dbReference type="CDD" id="cd00609">
    <property type="entry name" value="AAT_like"/>
    <property type="match status" value="1"/>
</dbReference>
<dbReference type="Gene3D" id="3.90.1150.10">
    <property type="entry name" value="Aspartate Aminotransferase, domain 1"/>
    <property type="match status" value="1"/>
</dbReference>
<dbReference type="Gene3D" id="3.40.640.10">
    <property type="entry name" value="Type I PLP-dependent aspartate aminotransferase-like (Major domain)"/>
    <property type="match status" value="1"/>
</dbReference>
<dbReference type="HAMAP" id="MF_01023">
    <property type="entry name" value="HisC_aminotrans_2"/>
    <property type="match status" value="1"/>
</dbReference>
<dbReference type="InterPro" id="IPR001917">
    <property type="entry name" value="Aminotrans_II_pyridoxalP_BS"/>
</dbReference>
<dbReference type="InterPro" id="IPR004839">
    <property type="entry name" value="Aminotransferase_I/II_large"/>
</dbReference>
<dbReference type="InterPro" id="IPR005861">
    <property type="entry name" value="HisP_aminotrans"/>
</dbReference>
<dbReference type="InterPro" id="IPR050106">
    <property type="entry name" value="HistidinolP_aminotransfase"/>
</dbReference>
<dbReference type="InterPro" id="IPR015424">
    <property type="entry name" value="PyrdxlP-dep_Trfase"/>
</dbReference>
<dbReference type="InterPro" id="IPR015421">
    <property type="entry name" value="PyrdxlP-dep_Trfase_major"/>
</dbReference>
<dbReference type="InterPro" id="IPR015422">
    <property type="entry name" value="PyrdxlP-dep_Trfase_small"/>
</dbReference>
<dbReference type="NCBIfam" id="TIGR01141">
    <property type="entry name" value="hisC"/>
    <property type="match status" value="1"/>
</dbReference>
<dbReference type="PANTHER" id="PTHR43643:SF3">
    <property type="entry name" value="HISTIDINOL-PHOSPHATE AMINOTRANSFERASE"/>
    <property type="match status" value="1"/>
</dbReference>
<dbReference type="PANTHER" id="PTHR43643">
    <property type="entry name" value="HISTIDINOL-PHOSPHATE AMINOTRANSFERASE 2"/>
    <property type="match status" value="1"/>
</dbReference>
<dbReference type="Pfam" id="PF00155">
    <property type="entry name" value="Aminotran_1_2"/>
    <property type="match status" value="1"/>
</dbReference>
<dbReference type="SUPFAM" id="SSF53383">
    <property type="entry name" value="PLP-dependent transferases"/>
    <property type="match status" value="1"/>
</dbReference>
<dbReference type="PROSITE" id="PS00599">
    <property type="entry name" value="AA_TRANSFER_CLASS_2"/>
    <property type="match status" value="1"/>
</dbReference>
<proteinExistence type="inferred from homology"/>
<organism>
    <name type="scientific">Ralstonia nicotianae (strain ATCC BAA-1114 / GMI1000)</name>
    <name type="common">Ralstonia solanacearum</name>
    <dbReference type="NCBI Taxonomy" id="267608"/>
    <lineage>
        <taxon>Bacteria</taxon>
        <taxon>Pseudomonadati</taxon>
        <taxon>Pseudomonadota</taxon>
        <taxon>Betaproteobacteria</taxon>
        <taxon>Burkholderiales</taxon>
        <taxon>Burkholderiaceae</taxon>
        <taxon>Ralstonia</taxon>
        <taxon>Ralstonia solanacearum species complex</taxon>
    </lineage>
</organism>
<reference key="1">
    <citation type="journal article" date="2002" name="Nature">
        <title>Genome sequence of the plant pathogen Ralstonia solanacearum.</title>
        <authorList>
            <person name="Salanoubat M."/>
            <person name="Genin S."/>
            <person name="Artiguenave F."/>
            <person name="Gouzy J."/>
            <person name="Mangenot S."/>
            <person name="Arlat M."/>
            <person name="Billault A."/>
            <person name="Brottier P."/>
            <person name="Camus J.-C."/>
            <person name="Cattolico L."/>
            <person name="Chandler M."/>
            <person name="Choisne N."/>
            <person name="Claudel-Renard C."/>
            <person name="Cunnac S."/>
            <person name="Demange N."/>
            <person name="Gaspin C."/>
            <person name="Lavie M."/>
            <person name="Moisan A."/>
            <person name="Robert C."/>
            <person name="Saurin W."/>
            <person name="Schiex T."/>
            <person name="Siguier P."/>
            <person name="Thebault P."/>
            <person name="Whalen M."/>
            <person name="Wincker P."/>
            <person name="Levy M."/>
            <person name="Weissenbach J."/>
            <person name="Boucher C.A."/>
        </authorList>
    </citation>
    <scope>NUCLEOTIDE SEQUENCE [LARGE SCALE GENOMIC DNA]</scope>
    <source>
        <strain>ATCC BAA-1114 / GMI1000</strain>
    </source>
</reference>
<comment type="catalytic activity">
    <reaction>
        <text>L-histidinol phosphate + 2-oxoglutarate = 3-(imidazol-4-yl)-2-oxopropyl phosphate + L-glutamate</text>
        <dbReference type="Rhea" id="RHEA:23744"/>
        <dbReference type="ChEBI" id="CHEBI:16810"/>
        <dbReference type="ChEBI" id="CHEBI:29985"/>
        <dbReference type="ChEBI" id="CHEBI:57766"/>
        <dbReference type="ChEBI" id="CHEBI:57980"/>
        <dbReference type="EC" id="2.6.1.9"/>
    </reaction>
</comment>
<comment type="cofactor">
    <cofactor evidence="1">
        <name>pyridoxal 5'-phosphate</name>
        <dbReference type="ChEBI" id="CHEBI:597326"/>
    </cofactor>
</comment>
<comment type="pathway">
    <text>Amino-acid biosynthesis; L-histidine biosynthesis; L-histidine from 5-phospho-alpha-D-ribose 1-diphosphate: step 7/9.</text>
</comment>
<comment type="subunit">
    <text evidence="1">Homodimer.</text>
</comment>
<comment type="similarity">
    <text evidence="2">Belongs to the class-II pyridoxal-phosphate-dependent aminotransferase family. Histidinol-phosphate aminotransferase subfamily.</text>
</comment>
<keyword id="KW-0028">Amino-acid biosynthesis</keyword>
<keyword id="KW-0032">Aminotransferase</keyword>
<keyword id="KW-0368">Histidine biosynthesis</keyword>
<keyword id="KW-0663">Pyridoxal phosphate</keyword>
<keyword id="KW-1185">Reference proteome</keyword>
<keyword id="KW-0808">Transferase</keyword>